<reference key="1">
    <citation type="submission" date="2008-04" db="EMBL/GenBank/DDBJ databases">
        <title>Complete sequence of chromosome of Natranaerobius thermophilus JW/NM-WN-LF.</title>
        <authorList>
            <consortium name="US DOE Joint Genome Institute"/>
            <person name="Copeland A."/>
            <person name="Lucas S."/>
            <person name="Lapidus A."/>
            <person name="Glavina del Rio T."/>
            <person name="Dalin E."/>
            <person name="Tice H."/>
            <person name="Bruce D."/>
            <person name="Goodwin L."/>
            <person name="Pitluck S."/>
            <person name="Chertkov O."/>
            <person name="Brettin T."/>
            <person name="Detter J.C."/>
            <person name="Han C."/>
            <person name="Kuske C.R."/>
            <person name="Schmutz J."/>
            <person name="Larimer F."/>
            <person name="Land M."/>
            <person name="Hauser L."/>
            <person name="Kyrpides N."/>
            <person name="Lykidis A."/>
            <person name="Mesbah N.M."/>
            <person name="Wiegel J."/>
        </authorList>
    </citation>
    <scope>NUCLEOTIDE SEQUENCE [LARGE SCALE GENOMIC DNA]</scope>
    <source>
        <strain>ATCC BAA-1301 / DSM 18059 / JW/NM-WN-LF</strain>
    </source>
</reference>
<dbReference type="EC" id="2.5.1.75" evidence="1"/>
<dbReference type="EMBL" id="CP001034">
    <property type="protein sequence ID" value="ACB85081.1"/>
    <property type="molecule type" value="Genomic_DNA"/>
</dbReference>
<dbReference type="RefSeq" id="WP_012447953.1">
    <property type="nucleotide sequence ID" value="NC_010718.1"/>
</dbReference>
<dbReference type="SMR" id="B2A3X9"/>
<dbReference type="FunCoup" id="B2A3X9">
    <property type="interactions" value="416"/>
</dbReference>
<dbReference type="STRING" id="457570.Nther_1498"/>
<dbReference type="KEGG" id="nth:Nther_1498"/>
<dbReference type="eggNOG" id="COG0324">
    <property type="taxonomic scope" value="Bacteria"/>
</dbReference>
<dbReference type="HOGENOM" id="CLU_032616_0_1_9"/>
<dbReference type="InParanoid" id="B2A3X9"/>
<dbReference type="OrthoDB" id="9776390at2"/>
<dbReference type="Proteomes" id="UP000001683">
    <property type="component" value="Chromosome"/>
</dbReference>
<dbReference type="GO" id="GO:0005524">
    <property type="term" value="F:ATP binding"/>
    <property type="evidence" value="ECO:0007669"/>
    <property type="project" value="UniProtKB-UniRule"/>
</dbReference>
<dbReference type="GO" id="GO:0052381">
    <property type="term" value="F:tRNA dimethylallyltransferase activity"/>
    <property type="evidence" value="ECO:0007669"/>
    <property type="project" value="UniProtKB-UniRule"/>
</dbReference>
<dbReference type="GO" id="GO:0006400">
    <property type="term" value="P:tRNA modification"/>
    <property type="evidence" value="ECO:0007669"/>
    <property type="project" value="TreeGrafter"/>
</dbReference>
<dbReference type="FunFam" id="1.10.20.140:FF:000001">
    <property type="entry name" value="tRNA dimethylallyltransferase"/>
    <property type="match status" value="1"/>
</dbReference>
<dbReference type="Gene3D" id="1.10.20.140">
    <property type="match status" value="1"/>
</dbReference>
<dbReference type="Gene3D" id="3.40.50.300">
    <property type="entry name" value="P-loop containing nucleotide triphosphate hydrolases"/>
    <property type="match status" value="1"/>
</dbReference>
<dbReference type="HAMAP" id="MF_00185">
    <property type="entry name" value="IPP_trans"/>
    <property type="match status" value="1"/>
</dbReference>
<dbReference type="InterPro" id="IPR039657">
    <property type="entry name" value="Dimethylallyltransferase"/>
</dbReference>
<dbReference type="InterPro" id="IPR018022">
    <property type="entry name" value="IPT"/>
</dbReference>
<dbReference type="InterPro" id="IPR027417">
    <property type="entry name" value="P-loop_NTPase"/>
</dbReference>
<dbReference type="NCBIfam" id="TIGR00174">
    <property type="entry name" value="miaA"/>
    <property type="match status" value="1"/>
</dbReference>
<dbReference type="PANTHER" id="PTHR11088">
    <property type="entry name" value="TRNA DIMETHYLALLYLTRANSFERASE"/>
    <property type="match status" value="1"/>
</dbReference>
<dbReference type="PANTHER" id="PTHR11088:SF60">
    <property type="entry name" value="TRNA DIMETHYLALLYLTRANSFERASE"/>
    <property type="match status" value="1"/>
</dbReference>
<dbReference type="Pfam" id="PF01715">
    <property type="entry name" value="IPPT"/>
    <property type="match status" value="1"/>
</dbReference>
<dbReference type="SUPFAM" id="SSF52540">
    <property type="entry name" value="P-loop containing nucleoside triphosphate hydrolases"/>
    <property type="match status" value="2"/>
</dbReference>
<keyword id="KW-0067">ATP-binding</keyword>
<keyword id="KW-0460">Magnesium</keyword>
<keyword id="KW-0547">Nucleotide-binding</keyword>
<keyword id="KW-1185">Reference proteome</keyword>
<keyword id="KW-0808">Transferase</keyword>
<keyword id="KW-0819">tRNA processing</keyword>
<feature type="chain" id="PRO_0000377237" description="tRNA dimethylallyltransferase">
    <location>
        <begin position="1"/>
        <end position="332"/>
    </location>
</feature>
<feature type="region of interest" description="Interaction with substrate tRNA" evidence="1">
    <location>
        <begin position="57"/>
        <end position="60"/>
    </location>
</feature>
<feature type="binding site" evidence="1">
    <location>
        <begin position="30"/>
        <end position="37"/>
    </location>
    <ligand>
        <name>ATP</name>
        <dbReference type="ChEBI" id="CHEBI:30616"/>
    </ligand>
</feature>
<feature type="binding site" evidence="1">
    <location>
        <begin position="32"/>
        <end position="37"/>
    </location>
    <ligand>
        <name>substrate</name>
    </ligand>
</feature>
<feature type="site" description="Interaction with substrate tRNA" evidence="1">
    <location>
        <position position="123"/>
    </location>
</feature>
<feature type="site" description="Interaction with substrate tRNA" evidence="1">
    <location>
        <position position="146"/>
    </location>
</feature>
<proteinExistence type="inferred from homology"/>
<gene>
    <name evidence="1" type="primary">miaA</name>
    <name type="ordered locus">Nther_1498</name>
</gene>
<organism>
    <name type="scientific">Natranaerobius thermophilus (strain ATCC BAA-1301 / DSM 18059 / JW/NM-WN-LF)</name>
    <dbReference type="NCBI Taxonomy" id="457570"/>
    <lineage>
        <taxon>Bacteria</taxon>
        <taxon>Bacillati</taxon>
        <taxon>Bacillota</taxon>
        <taxon>Clostridia</taxon>
        <taxon>Natranaerobiales</taxon>
        <taxon>Natranaerobiaceae</taxon>
        <taxon>Natranaerobius</taxon>
    </lineage>
</organism>
<accession>B2A3X9</accession>
<comment type="function">
    <text evidence="1">Catalyzes the transfer of a dimethylallyl group onto the adenine at position 37 in tRNAs that read codons beginning with uridine, leading to the formation of N6-(dimethylallyl)adenosine (i(6)A).</text>
</comment>
<comment type="catalytic activity">
    <reaction evidence="1">
        <text>adenosine(37) in tRNA + dimethylallyl diphosphate = N(6)-dimethylallyladenosine(37) in tRNA + diphosphate</text>
        <dbReference type="Rhea" id="RHEA:26482"/>
        <dbReference type="Rhea" id="RHEA-COMP:10162"/>
        <dbReference type="Rhea" id="RHEA-COMP:10375"/>
        <dbReference type="ChEBI" id="CHEBI:33019"/>
        <dbReference type="ChEBI" id="CHEBI:57623"/>
        <dbReference type="ChEBI" id="CHEBI:74411"/>
        <dbReference type="ChEBI" id="CHEBI:74415"/>
        <dbReference type="EC" id="2.5.1.75"/>
    </reaction>
</comment>
<comment type="cofactor">
    <cofactor evidence="1">
        <name>Mg(2+)</name>
        <dbReference type="ChEBI" id="CHEBI:18420"/>
    </cofactor>
</comment>
<comment type="subunit">
    <text evidence="1">Monomer.</text>
</comment>
<comment type="similarity">
    <text evidence="1">Belongs to the IPP transferase family.</text>
</comment>
<name>MIAA_NATTJ</name>
<protein>
    <recommendedName>
        <fullName evidence="1">tRNA dimethylallyltransferase</fullName>
        <ecNumber evidence="1">2.5.1.75</ecNumber>
    </recommendedName>
    <alternativeName>
        <fullName evidence="1">Dimethylallyl diphosphate:tRNA dimethylallyltransferase</fullName>
        <shortName evidence="1">DMAPP:tRNA dimethylallyltransferase</shortName>
        <shortName evidence="1">DMATase</shortName>
    </alternativeName>
    <alternativeName>
        <fullName evidence="1">Isopentenyl-diphosphate:tRNA isopentenyltransferase</fullName>
        <shortName evidence="1">IPP transferase</shortName>
        <shortName evidence="1">IPPT</shortName>
        <shortName evidence="1">IPTase</shortName>
    </alternativeName>
</protein>
<sequence>MMNTYDNQHREQQKLSENILKTKPLIAIVGPTAVGKTDISIKVAERLPVSTGIISADSMQVYKKMDIGTAKPSQEIRTKIPHYLVDNVEPDEEFSVGRYQKHAKSILNQLYQNKELPLLVGGTGLYVDALIYDFSMNELPKSTKYRQELQQKAEQDGLEQLYRKLEKVDPDAADRIHPNDQRRIIRALEVYYYTGEPISQRQKRRYDSPYNLLIFGITMDRNKLYNKIETRVDQMIDQGLVEEVKYLLENGYHLQLTSMQGLGYKEIAGYLMGDYDLETAVQKLKKNTKRFAKRQLSWFRRDPNIKWLDITETDKSEICDKIIDMILKEYLE</sequence>
<evidence type="ECO:0000255" key="1">
    <source>
        <dbReference type="HAMAP-Rule" id="MF_00185"/>
    </source>
</evidence>